<gene>
    <name evidence="1" type="primary">recR</name>
    <name type="ordered locus">SeD_A0531</name>
</gene>
<dbReference type="EMBL" id="CP001144">
    <property type="protein sequence ID" value="ACH75315.1"/>
    <property type="molecule type" value="Genomic_DNA"/>
</dbReference>
<dbReference type="RefSeq" id="WP_001195023.1">
    <property type="nucleotide sequence ID" value="NC_011205.1"/>
</dbReference>
<dbReference type="SMR" id="B5FLJ4"/>
<dbReference type="KEGG" id="sed:SeD_A0531"/>
<dbReference type="HOGENOM" id="CLU_060739_1_2_6"/>
<dbReference type="Proteomes" id="UP000008322">
    <property type="component" value="Chromosome"/>
</dbReference>
<dbReference type="GO" id="GO:0003677">
    <property type="term" value="F:DNA binding"/>
    <property type="evidence" value="ECO:0007669"/>
    <property type="project" value="UniProtKB-UniRule"/>
</dbReference>
<dbReference type="GO" id="GO:0008270">
    <property type="term" value="F:zinc ion binding"/>
    <property type="evidence" value="ECO:0007669"/>
    <property type="project" value="UniProtKB-KW"/>
</dbReference>
<dbReference type="GO" id="GO:0006310">
    <property type="term" value="P:DNA recombination"/>
    <property type="evidence" value="ECO:0007669"/>
    <property type="project" value="UniProtKB-UniRule"/>
</dbReference>
<dbReference type="GO" id="GO:0006281">
    <property type="term" value="P:DNA repair"/>
    <property type="evidence" value="ECO:0007669"/>
    <property type="project" value="UniProtKB-UniRule"/>
</dbReference>
<dbReference type="CDD" id="cd01025">
    <property type="entry name" value="TOPRIM_recR"/>
    <property type="match status" value="1"/>
</dbReference>
<dbReference type="FunFam" id="1.10.8.420:FF:000001">
    <property type="entry name" value="Recombination protein RecR"/>
    <property type="match status" value="1"/>
</dbReference>
<dbReference type="FunFam" id="3.40.1360.10:FF:000001">
    <property type="entry name" value="Recombination protein RecR"/>
    <property type="match status" value="1"/>
</dbReference>
<dbReference type="Gene3D" id="3.40.1360.10">
    <property type="match status" value="1"/>
</dbReference>
<dbReference type="Gene3D" id="6.10.250.240">
    <property type="match status" value="1"/>
</dbReference>
<dbReference type="Gene3D" id="1.10.8.420">
    <property type="entry name" value="RecR Domain 1"/>
    <property type="match status" value="1"/>
</dbReference>
<dbReference type="HAMAP" id="MF_00017">
    <property type="entry name" value="RecR"/>
    <property type="match status" value="1"/>
</dbReference>
<dbReference type="InterPro" id="IPR000093">
    <property type="entry name" value="DNA_Rcmb_RecR"/>
</dbReference>
<dbReference type="InterPro" id="IPR023627">
    <property type="entry name" value="Rcmb_RecR"/>
</dbReference>
<dbReference type="InterPro" id="IPR015967">
    <property type="entry name" value="Rcmb_RecR_Znf"/>
</dbReference>
<dbReference type="InterPro" id="IPR006171">
    <property type="entry name" value="TOPRIM_dom"/>
</dbReference>
<dbReference type="InterPro" id="IPR034137">
    <property type="entry name" value="TOPRIM_RecR"/>
</dbReference>
<dbReference type="NCBIfam" id="TIGR00615">
    <property type="entry name" value="recR"/>
    <property type="match status" value="1"/>
</dbReference>
<dbReference type="PANTHER" id="PTHR30446">
    <property type="entry name" value="RECOMBINATION PROTEIN RECR"/>
    <property type="match status" value="1"/>
</dbReference>
<dbReference type="PANTHER" id="PTHR30446:SF0">
    <property type="entry name" value="RECOMBINATION PROTEIN RECR"/>
    <property type="match status" value="1"/>
</dbReference>
<dbReference type="Pfam" id="PF21175">
    <property type="entry name" value="RecR_C"/>
    <property type="match status" value="1"/>
</dbReference>
<dbReference type="Pfam" id="PF21176">
    <property type="entry name" value="RecR_HhH"/>
    <property type="match status" value="1"/>
</dbReference>
<dbReference type="Pfam" id="PF02132">
    <property type="entry name" value="RecR_ZnF"/>
    <property type="match status" value="1"/>
</dbReference>
<dbReference type="Pfam" id="PF13662">
    <property type="entry name" value="Toprim_4"/>
    <property type="match status" value="1"/>
</dbReference>
<dbReference type="SMART" id="SM00493">
    <property type="entry name" value="TOPRIM"/>
    <property type="match status" value="1"/>
</dbReference>
<dbReference type="SUPFAM" id="SSF111304">
    <property type="entry name" value="Recombination protein RecR"/>
    <property type="match status" value="1"/>
</dbReference>
<dbReference type="PROSITE" id="PS01300">
    <property type="entry name" value="RECR"/>
    <property type="match status" value="1"/>
</dbReference>
<dbReference type="PROSITE" id="PS50880">
    <property type="entry name" value="TOPRIM"/>
    <property type="match status" value="1"/>
</dbReference>
<name>RECR_SALDC</name>
<feature type="chain" id="PRO_1000089763" description="Recombination protein RecR">
    <location>
        <begin position="1"/>
        <end position="201"/>
    </location>
</feature>
<feature type="domain" description="Toprim" evidence="1">
    <location>
        <begin position="81"/>
        <end position="176"/>
    </location>
</feature>
<feature type="zinc finger region" description="C4-type" evidence="1">
    <location>
        <begin position="57"/>
        <end position="72"/>
    </location>
</feature>
<sequence length="201" mass="21715">MQTSPLLTQLMEALRCLPGVGPKSAQRMAFTLLQRDRSGGMRLAQALTRAMSEIGHCADCRTFTEQDVCNICSNPRRQENGQICVVESPADIYAIEQTGQFSGRYFVLMGHLSPLDGIGPDDIGLDRLEQRLASEKISELILATNPTVEGEATANYIAELCAEAGVEASRIAHGVPVGGELEMVDGTTLSHSLAGRHKIIF</sequence>
<comment type="function">
    <text evidence="1">May play a role in DNA repair. It seems to be involved in an RecBC-independent recombinational process of DNA repair. It may act with RecF and RecO.</text>
</comment>
<comment type="similarity">
    <text evidence="1">Belongs to the RecR family.</text>
</comment>
<reference key="1">
    <citation type="journal article" date="2011" name="J. Bacteriol.">
        <title>Comparative genomics of 28 Salmonella enterica isolates: evidence for CRISPR-mediated adaptive sublineage evolution.</title>
        <authorList>
            <person name="Fricke W.F."/>
            <person name="Mammel M.K."/>
            <person name="McDermott P.F."/>
            <person name="Tartera C."/>
            <person name="White D.G."/>
            <person name="Leclerc J.E."/>
            <person name="Ravel J."/>
            <person name="Cebula T.A."/>
        </authorList>
    </citation>
    <scope>NUCLEOTIDE SEQUENCE [LARGE SCALE GENOMIC DNA]</scope>
    <source>
        <strain>CT_02021853</strain>
    </source>
</reference>
<protein>
    <recommendedName>
        <fullName evidence="1">Recombination protein RecR</fullName>
    </recommendedName>
</protein>
<proteinExistence type="inferred from homology"/>
<keyword id="KW-0227">DNA damage</keyword>
<keyword id="KW-0233">DNA recombination</keyword>
<keyword id="KW-0234">DNA repair</keyword>
<keyword id="KW-0479">Metal-binding</keyword>
<keyword id="KW-0862">Zinc</keyword>
<keyword id="KW-0863">Zinc-finger</keyword>
<evidence type="ECO:0000255" key="1">
    <source>
        <dbReference type="HAMAP-Rule" id="MF_00017"/>
    </source>
</evidence>
<organism>
    <name type="scientific">Salmonella dublin (strain CT_02021853)</name>
    <dbReference type="NCBI Taxonomy" id="439851"/>
    <lineage>
        <taxon>Bacteria</taxon>
        <taxon>Pseudomonadati</taxon>
        <taxon>Pseudomonadota</taxon>
        <taxon>Gammaproteobacteria</taxon>
        <taxon>Enterobacterales</taxon>
        <taxon>Enterobacteriaceae</taxon>
        <taxon>Salmonella</taxon>
    </lineage>
</organism>
<accession>B5FLJ4</accession>